<comment type="function">
    <text evidence="1">The heterodimer acts as an E1 ligase for sumo1, sumo2, and sumo3. It mediates ATP-dependent activation of sumo proteins followed by formation of a thioester bond between a sumo protein and a conserved active site cysteine residue on uba2/sae2 (By similarity).</text>
</comment>
<comment type="pathway">
    <text>Protein modification; protein sumoylation.</text>
</comment>
<comment type="subunit">
    <text evidence="1">Heterodimer of sae1 and uba2/sae2. The heterodimer corresponds to the two domains that are encoded on a single polypeptide chain in ubiquitin-activating enzyme E1. Interacts with ube2i (By similarity).</text>
</comment>
<comment type="subcellular location">
    <subcellularLocation>
        <location evidence="1">Nucleus</location>
    </subcellularLocation>
</comment>
<comment type="similarity">
    <text evidence="2">Belongs to the ubiquitin-activating E1 family.</text>
</comment>
<reference key="1">
    <citation type="submission" date="2006-06" db="EMBL/GenBank/DDBJ databases">
        <authorList>
            <consortium name="NIH - Xenopus Gene Collection (XGC) project"/>
        </authorList>
    </citation>
    <scope>NUCLEOTIDE SEQUENCE [LARGE SCALE MRNA]</scope>
    <source>
        <tissue>Gastrula</tissue>
    </source>
</reference>
<reference key="2">
    <citation type="submission" date="2007-03" db="EMBL/GenBank/DDBJ databases">
        <authorList>
            <consortium name="NIH - Xenopus Gene Collection (XGC) project"/>
        </authorList>
    </citation>
    <scope>NUCLEOTIDE SEQUENCE [LARGE SCALE MRNA]</scope>
    <source>
        <tissue>Embryo</tissue>
    </source>
</reference>
<evidence type="ECO:0000250" key="1"/>
<evidence type="ECO:0000305" key="2"/>
<dbReference type="EMBL" id="CR848627">
    <property type="protein sequence ID" value="CAJ83949.1"/>
    <property type="molecule type" value="mRNA"/>
</dbReference>
<dbReference type="EMBL" id="BC135749">
    <property type="protein sequence ID" value="AAI35750.1"/>
    <property type="molecule type" value="mRNA"/>
</dbReference>
<dbReference type="RefSeq" id="NP_001016870.1">
    <property type="nucleotide sequence ID" value="NM_001016870.2"/>
</dbReference>
<dbReference type="SMR" id="Q28DS0"/>
<dbReference type="FunCoup" id="Q28DS0">
    <property type="interactions" value="4603"/>
</dbReference>
<dbReference type="STRING" id="8364.ENSXETP00000012806"/>
<dbReference type="PaxDb" id="8364-ENSXETP00000000333"/>
<dbReference type="DNASU" id="549624"/>
<dbReference type="GeneID" id="549624"/>
<dbReference type="KEGG" id="xtr:549624"/>
<dbReference type="AGR" id="Xenbase:XB-GENE-923356"/>
<dbReference type="CTD" id="10055"/>
<dbReference type="Xenbase" id="XB-GENE-923356">
    <property type="gene designation" value="sae1"/>
</dbReference>
<dbReference type="eggNOG" id="KOG2014">
    <property type="taxonomic scope" value="Eukaryota"/>
</dbReference>
<dbReference type="HOGENOM" id="CLU_002556_4_0_1"/>
<dbReference type="InParanoid" id="Q28DS0"/>
<dbReference type="OrthoDB" id="412647at2759"/>
<dbReference type="Reactome" id="R-XTR-3065676">
    <property type="pathway name" value="SUMO is conjugated to E1 (UBA2:SAE1)"/>
</dbReference>
<dbReference type="Reactome" id="R-XTR-3065678">
    <property type="pathway name" value="SUMO is transferred from E1 to E2 (UBE2I, UBC9)"/>
</dbReference>
<dbReference type="UniPathway" id="UPA00886"/>
<dbReference type="Proteomes" id="UP000008143">
    <property type="component" value="Chromosome 8"/>
</dbReference>
<dbReference type="Bgee" id="ENSXETG00000000161">
    <property type="expression patterns" value="Expressed in egg cell and 14 other cell types or tissues"/>
</dbReference>
<dbReference type="ExpressionAtlas" id="Q28DS0">
    <property type="expression patterns" value="baseline"/>
</dbReference>
<dbReference type="GO" id="GO:0031510">
    <property type="term" value="C:SUMO activating enzyme complex"/>
    <property type="evidence" value="ECO:0000250"/>
    <property type="project" value="UniProtKB"/>
</dbReference>
<dbReference type="GO" id="GO:0008641">
    <property type="term" value="F:ubiquitin-like modifier activating enzyme activity"/>
    <property type="evidence" value="ECO:0007669"/>
    <property type="project" value="InterPro"/>
</dbReference>
<dbReference type="GO" id="GO:0016925">
    <property type="term" value="P:protein sumoylation"/>
    <property type="evidence" value="ECO:0000250"/>
    <property type="project" value="UniProtKB"/>
</dbReference>
<dbReference type="CDD" id="cd01492">
    <property type="entry name" value="Aos1_SUMO"/>
    <property type="match status" value="1"/>
</dbReference>
<dbReference type="FunFam" id="3.40.50.720:FF:000274">
    <property type="entry name" value="SUMO-activating enzyme subunit 1 isoform X1"/>
    <property type="match status" value="1"/>
</dbReference>
<dbReference type="Gene3D" id="3.40.50.720">
    <property type="entry name" value="NAD(P)-binding Rossmann-like Domain"/>
    <property type="match status" value="1"/>
</dbReference>
<dbReference type="InterPro" id="IPR045886">
    <property type="entry name" value="ThiF/MoeB/HesA"/>
</dbReference>
<dbReference type="InterPro" id="IPR000594">
    <property type="entry name" value="ThiF_NAD_FAD-bd"/>
</dbReference>
<dbReference type="InterPro" id="IPR035985">
    <property type="entry name" value="Ubiquitin-activating_enz"/>
</dbReference>
<dbReference type="InterPro" id="IPR000011">
    <property type="entry name" value="UBQ/SUMO-activ_enz_E1-like"/>
</dbReference>
<dbReference type="PANTHER" id="PTHR10953:SF162">
    <property type="entry name" value="SUMO-ACTIVATING ENZYME SUBUNIT 1"/>
    <property type="match status" value="1"/>
</dbReference>
<dbReference type="PANTHER" id="PTHR10953">
    <property type="entry name" value="UBIQUITIN-ACTIVATING ENZYME E1"/>
    <property type="match status" value="1"/>
</dbReference>
<dbReference type="Pfam" id="PF00899">
    <property type="entry name" value="ThiF"/>
    <property type="match status" value="1"/>
</dbReference>
<dbReference type="PRINTS" id="PR01849">
    <property type="entry name" value="UBIQUITINACT"/>
</dbReference>
<dbReference type="SUPFAM" id="SSF69572">
    <property type="entry name" value="Activating enzymes of the ubiquitin-like proteins"/>
    <property type="match status" value="1"/>
</dbReference>
<protein>
    <recommendedName>
        <fullName>SUMO-activating enzyme subunit 1</fullName>
    </recommendedName>
    <alternativeName>
        <fullName>Ubiquitin-like 1-activating enzyme E1A</fullName>
    </alternativeName>
</protein>
<feature type="chain" id="PRO_0000268871" description="SUMO-activating enzyme subunit 1">
    <location>
        <begin position="1"/>
        <end position="347"/>
    </location>
</feature>
<name>SAE1_XENTR</name>
<sequence>MVEKEEAVISEEEAAQYDRQIRLWGLEAQKRLRTSRVLLVGMRGLGAEVAKNLILAGVKALTLLDHEQVSSEDSRAQFLIPSGSLGQNRAEASLNRARNLNPMVSVEADTENINQKSDDFFTQFDVVCLTSCSRDLLVRVDHICHKHNIKFFTGDVFGYHGYMFADLGEHEFVEEKAKVAKVSKAKQEVEDGPEAKKAKIDPTESILVKKKVQFCPLKDALEIDWHSEKAKSALKKTPTDFFLLQVLMKFRTDKKRDPQPSNYQEDSELLLQICSDVLDSLGVSPDLLPKDFASYCFSEMAPVCAVVGGVLGQEIVKALSQRDAPHNNFFFFDGRSSNGIVDCLGSK</sequence>
<proteinExistence type="evidence at transcript level"/>
<accession>Q28DS0</accession>
<accession>A4QNJ2</accession>
<keyword id="KW-0436">Ligase</keyword>
<keyword id="KW-0539">Nucleus</keyword>
<keyword id="KW-1185">Reference proteome</keyword>
<keyword id="KW-0833">Ubl conjugation pathway</keyword>
<organism>
    <name type="scientific">Xenopus tropicalis</name>
    <name type="common">Western clawed frog</name>
    <name type="synonym">Silurana tropicalis</name>
    <dbReference type="NCBI Taxonomy" id="8364"/>
    <lineage>
        <taxon>Eukaryota</taxon>
        <taxon>Metazoa</taxon>
        <taxon>Chordata</taxon>
        <taxon>Craniata</taxon>
        <taxon>Vertebrata</taxon>
        <taxon>Euteleostomi</taxon>
        <taxon>Amphibia</taxon>
        <taxon>Batrachia</taxon>
        <taxon>Anura</taxon>
        <taxon>Pipoidea</taxon>
        <taxon>Pipidae</taxon>
        <taxon>Xenopodinae</taxon>
        <taxon>Xenopus</taxon>
        <taxon>Silurana</taxon>
    </lineage>
</organism>
<gene>
    <name type="primary">sae1</name>
    <name type="synonym">uble1a</name>
    <name type="ORF">TGas081c19.1</name>
</gene>